<reference key="1">
    <citation type="submission" date="2004-11" db="EMBL/GenBank/DDBJ databases">
        <title>Complete genome sequence of Thermus thermophilus HB8.</title>
        <authorList>
            <person name="Masui R."/>
            <person name="Kurokawa K."/>
            <person name="Nakagawa N."/>
            <person name="Tokunaga F."/>
            <person name="Koyama Y."/>
            <person name="Shibata T."/>
            <person name="Oshima T."/>
            <person name="Yokoyama S."/>
            <person name="Yasunaga T."/>
            <person name="Kuramitsu S."/>
        </authorList>
    </citation>
    <scope>NUCLEOTIDE SEQUENCE [LARGE SCALE GENOMIC DNA]</scope>
    <source>
        <strain>ATCC 27634 / DSM 579 / HB8</strain>
    </source>
</reference>
<dbReference type="EC" id="3.1.-.-" evidence="1"/>
<dbReference type="EMBL" id="AP008226">
    <property type="protein sequence ID" value="BAD70868.1"/>
    <property type="molecule type" value="Genomic_DNA"/>
</dbReference>
<dbReference type="RefSeq" id="WP_011173125.1">
    <property type="nucleotide sequence ID" value="NC_006461.1"/>
</dbReference>
<dbReference type="RefSeq" id="YP_144311.1">
    <property type="nucleotide sequence ID" value="NC_006461.1"/>
</dbReference>
<dbReference type="SMR" id="Q5SJG3"/>
<dbReference type="EnsemblBacteria" id="BAD70868">
    <property type="protein sequence ID" value="BAD70868"/>
    <property type="gene ID" value="BAD70868"/>
</dbReference>
<dbReference type="GeneID" id="3168301"/>
<dbReference type="KEGG" id="ttj:TTHA1045"/>
<dbReference type="PATRIC" id="fig|300852.9.peg.1025"/>
<dbReference type="eggNOG" id="COG0319">
    <property type="taxonomic scope" value="Bacteria"/>
</dbReference>
<dbReference type="HOGENOM" id="CLU_1692595_0_0_0"/>
<dbReference type="PhylomeDB" id="Q5SJG3"/>
<dbReference type="Proteomes" id="UP000000532">
    <property type="component" value="Chromosome"/>
</dbReference>
<dbReference type="GO" id="GO:0005737">
    <property type="term" value="C:cytoplasm"/>
    <property type="evidence" value="ECO:0007669"/>
    <property type="project" value="UniProtKB-SubCell"/>
</dbReference>
<dbReference type="GO" id="GO:0004222">
    <property type="term" value="F:metalloendopeptidase activity"/>
    <property type="evidence" value="ECO:0007669"/>
    <property type="project" value="InterPro"/>
</dbReference>
<dbReference type="GO" id="GO:0004521">
    <property type="term" value="F:RNA endonuclease activity"/>
    <property type="evidence" value="ECO:0007669"/>
    <property type="project" value="UniProtKB-UniRule"/>
</dbReference>
<dbReference type="GO" id="GO:0008270">
    <property type="term" value="F:zinc ion binding"/>
    <property type="evidence" value="ECO:0007669"/>
    <property type="project" value="UniProtKB-UniRule"/>
</dbReference>
<dbReference type="GO" id="GO:0006364">
    <property type="term" value="P:rRNA processing"/>
    <property type="evidence" value="ECO:0007669"/>
    <property type="project" value="UniProtKB-UniRule"/>
</dbReference>
<dbReference type="Gene3D" id="3.40.390.30">
    <property type="entry name" value="Metalloproteases ('zincins'), catalytic domain"/>
    <property type="match status" value="1"/>
</dbReference>
<dbReference type="HAMAP" id="MF_00009">
    <property type="entry name" value="Endoribonucl_YbeY"/>
    <property type="match status" value="1"/>
</dbReference>
<dbReference type="InterPro" id="IPR023091">
    <property type="entry name" value="MetalPrtase_cat_dom_sf_prd"/>
</dbReference>
<dbReference type="InterPro" id="IPR002036">
    <property type="entry name" value="YbeY"/>
</dbReference>
<dbReference type="NCBIfam" id="TIGR00043">
    <property type="entry name" value="rRNA maturation RNase YbeY"/>
    <property type="match status" value="1"/>
</dbReference>
<dbReference type="PANTHER" id="PTHR46986">
    <property type="entry name" value="ENDORIBONUCLEASE YBEY, CHLOROPLASTIC"/>
    <property type="match status" value="1"/>
</dbReference>
<dbReference type="PANTHER" id="PTHR46986:SF1">
    <property type="entry name" value="ENDORIBONUCLEASE YBEY, CHLOROPLASTIC"/>
    <property type="match status" value="1"/>
</dbReference>
<dbReference type="Pfam" id="PF02130">
    <property type="entry name" value="YbeY"/>
    <property type="match status" value="1"/>
</dbReference>
<dbReference type="SUPFAM" id="SSF55486">
    <property type="entry name" value="Metalloproteases ('zincins'), catalytic domain"/>
    <property type="match status" value="1"/>
</dbReference>
<organism>
    <name type="scientific">Thermus thermophilus (strain ATCC 27634 / DSM 579 / HB8)</name>
    <dbReference type="NCBI Taxonomy" id="300852"/>
    <lineage>
        <taxon>Bacteria</taxon>
        <taxon>Thermotogati</taxon>
        <taxon>Deinococcota</taxon>
        <taxon>Deinococci</taxon>
        <taxon>Thermales</taxon>
        <taxon>Thermaceae</taxon>
        <taxon>Thermus</taxon>
    </lineage>
</organism>
<gene>
    <name evidence="1" type="primary">ybeY</name>
    <name type="ordered locus">TTHA1045</name>
</gene>
<name>YBEY_THET8</name>
<sequence length="139" mass="15894">MVEVVRNKRPPRGLVPRLRRALAALMEELGVGDKGVTVILTGDRRLRALKREWWGEDEATDVLSFPHYEPGDPFVPPHLGDIWISLDTARRQAEARGASLEEEVLVLAAHGLWHLLGHDHQKEEDWEGFRRVQERILAL</sequence>
<proteinExistence type="inferred from homology"/>
<protein>
    <recommendedName>
        <fullName evidence="1">Endoribonuclease YbeY</fullName>
        <ecNumber evidence="1">3.1.-.-</ecNumber>
    </recommendedName>
</protein>
<comment type="function">
    <text evidence="1">Single strand-specific metallo-endoribonuclease involved in late-stage 70S ribosome quality control and in maturation of the 3' terminus of the 16S rRNA.</text>
</comment>
<comment type="cofactor">
    <cofactor evidence="1">
        <name>Zn(2+)</name>
        <dbReference type="ChEBI" id="CHEBI:29105"/>
    </cofactor>
    <text evidence="1">Binds 1 zinc ion.</text>
</comment>
<comment type="subcellular location">
    <subcellularLocation>
        <location evidence="1">Cytoplasm</location>
    </subcellularLocation>
</comment>
<comment type="similarity">
    <text evidence="1">Belongs to the endoribonuclease YbeY family.</text>
</comment>
<evidence type="ECO:0000255" key="1">
    <source>
        <dbReference type="HAMAP-Rule" id="MF_00009"/>
    </source>
</evidence>
<feature type="chain" id="PRO_0000102555" description="Endoribonuclease YbeY">
    <location>
        <begin position="1"/>
        <end position="139"/>
    </location>
</feature>
<feature type="binding site" evidence="1">
    <location>
        <position position="110"/>
    </location>
    <ligand>
        <name>Zn(2+)</name>
        <dbReference type="ChEBI" id="CHEBI:29105"/>
        <note>catalytic</note>
    </ligand>
</feature>
<feature type="binding site" evidence="1">
    <location>
        <position position="114"/>
    </location>
    <ligand>
        <name>Zn(2+)</name>
        <dbReference type="ChEBI" id="CHEBI:29105"/>
        <note>catalytic</note>
    </ligand>
</feature>
<feature type="binding site" evidence="1">
    <location>
        <position position="120"/>
    </location>
    <ligand>
        <name>Zn(2+)</name>
        <dbReference type="ChEBI" id="CHEBI:29105"/>
        <note>catalytic</note>
    </ligand>
</feature>
<accession>Q5SJG3</accession>
<keyword id="KW-0963">Cytoplasm</keyword>
<keyword id="KW-0255">Endonuclease</keyword>
<keyword id="KW-0378">Hydrolase</keyword>
<keyword id="KW-0479">Metal-binding</keyword>
<keyword id="KW-0540">Nuclease</keyword>
<keyword id="KW-1185">Reference proteome</keyword>
<keyword id="KW-0690">Ribosome biogenesis</keyword>
<keyword id="KW-0698">rRNA processing</keyword>
<keyword id="KW-0862">Zinc</keyword>